<evidence type="ECO:0000255" key="1">
    <source>
        <dbReference type="HAMAP-Rule" id="MF_00044"/>
    </source>
</evidence>
<evidence type="ECO:0000256" key="2">
    <source>
        <dbReference type="SAM" id="MobiDB-lite"/>
    </source>
</evidence>
<organism>
    <name type="scientific">Mycobacterium avium (strain 104)</name>
    <dbReference type="NCBI Taxonomy" id="243243"/>
    <lineage>
        <taxon>Bacteria</taxon>
        <taxon>Bacillati</taxon>
        <taxon>Actinomycetota</taxon>
        <taxon>Actinomycetes</taxon>
        <taxon>Mycobacteriales</taxon>
        <taxon>Mycobacteriaceae</taxon>
        <taxon>Mycobacterium</taxon>
        <taxon>Mycobacterium avium complex (MAC)</taxon>
    </lineage>
</organism>
<accession>A0QI91</accession>
<name>SYDND_MYCA1</name>
<sequence>MLRSHAAGSLRSSDAGQQVTLAGWVARRRDHGGVIFIDLRDASGITQVVFRDPDVLKQAHRLRAEFCVAVAGLVEIRPEGNANPEIATGDIEVNASSLTVLGESAPLPFQLDEPAGEELRLKYRYLDLRRDAPAAAIRLRSKVNAAAREVLDRHDFVEIETPTITRSTPEGARDFLVPARLHPGSFYALPQSPQLFKQLLMVAGMERYYQIARCYRDEDFRADRQPEFTQLDMEMSFVDAEDVIAISEEILAALWALIGYEIPRPIPRISYADAMARYGSDKPDLRFGLELVECSEFFKDTTFRVFQAPYVGAVVMPGGASQPRRTLDGWQEWAKQRGAKGLAYVLVGEDGELGGPVAKNLSEAERAGLAGHVGAAPGDCIFFAAGPAKPSRALLGAARSEIAHRLGLIDPQAWAFVWVVDPPLFEPADDATAAGDVAVGSGAWTAVHHAFTAPKPGYEDAIETDTGNVLADAYDIVCNGNEIGGGSIRIHRRDIQERVFAVMGLDNAEAREKFGFLLEAFTFGAPPHGGIAFGWDRINALLSRVDSIREVIAFPKTGGGVDPLTDAPAPITEQQRKESGIDVKPEPSKPH</sequence>
<protein>
    <recommendedName>
        <fullName evidence="1">Aspartate--tRNA(Asp/Asn) ligase</fullName>
        <ecNumber evidence="1">6.1.1.23</ecNumber>
    </recommendedName>
    <alternativeName>
        <fullName evidence="1">Aspartyl-tRNA synthetase</fullName>
        <shortName evidence="1">AspRS</shortName>
    </alternativeName>
    <alternativeName>
        <fullName evidence="1">Non-discriminating aspartyl-tRNA synthetase</fullName>
        <shortName evidence="1">ND-AspRS</shortName>
    </alternativeName>
</protein>
<reference key="1">
    <citation type="submission" date="2006-10" db="EMBL/GenBank/DDBJ databases">
        <authorList>
            <person name="Fleischmann R.D."/>
            <person name="Dodson R.J."/>
            <person name="Haft D.H."/>
            <person name="Merkel J.S."/>
            <person name="Nelson W.C."/>
            <person name="Fraser C.M."/>
        </authorList>
    </citation>
    <scope>NUCLEOTIDE SEQUENCE [LARGE SCALE GENOMIC DNA]</scope>
    <source>
        <strain>104</strain>
    </source>
</reference>
<feature type="chain" id="PRO_1000006710" description="Aspartate--tRNA(Asp/Asn) ligase">
    <location>
        <begin position="1"/>
        <end position="591"/>
    </location>
</feature>
<feature type="region of interest" description="Aspartate" evidence="1">
    <location>
        <begin position="194"/>
        <end position="197"/>
    </location>
</feature>
<feature type="region of interest" description="Disordered" evidence="2">
    <location>
        <begin position="559"/>
        <end position="591"/>
    </location>
</feature>
<feature type="compositionally biased region" description="Basic and acidic residues" evidence="2">
    <location>
        <begin position="574"/>
        <end position="591"/>
    </location>
</feature>
<feature type="binding site" evidence="1">
    <location>
        <position position="170"/>
    </location>
    <ligand>
        <name>L-aspartate</name>
        <dbReference type="ChEBI" id="CHEBI:29991"/>
    </ligand>
</feature>
<feature type="binding site" evidence="1">
    <location>
        <begin position="216"/>
        <end position="218"/>
    </location>
    <ligand>
        <name>ATP</name>
        <dbReference type="ChEBI" id="CHEBI:30616"/>
    </ligand>
</feature>
<feature type="binding site" evidence="1">
    <location>
        <position position="216"/>
    </location>
    <ligand>
        <name>L-aspartate</name>
        <dbReference type="ChEBI" id="CHEBI:29991"/>
    </ligand>
</feature>
<feature type="binding site" evidence="1">
    <location>
        <position position="225"/>
    </location>
    <ligand>
        <name>ATP</name>
        <dbReference type="ChEBI" id="CHEBI:30616"/>
    </ligand>
</feature>
<feature type="binding site" evidence="1">
    <location>
        <position position="448"/>
    </location>
    <ligand>
        <name>L-aspartate</name>
        <dbReference type="ChEBI" id="CHEBI:29991"/>
    </ligand>
</feature>
<feature type="binding site" evidence="1">
    <location>
        <position position="482"/>
    </location>
    <ligand>
        <name>ATP</name>
        <dbReference type="ChEBI" id="CHEBI:30616"/>
    </ligand>
</feature>
<feature type="binding site" evidence="1">
    <location>
        <position position="489"/>
    </location>
    <ligand>
        <name>L-aspartate</name>
        <dbReference type="ChEBI" id="CHEBI:29991"/>
    </ligand>
</feature>
<feature type="binding site" evidence="1">
    <location>
        <begin position="534"/>
        <end position="537"/>
    </location>
    <ligand>
        <name>ATP</name>
        <dbReference type="ChEBI" id="CHEBI:30616"/>
    </ligand>
</feature>
<feature type="site" description="Important for tRNA non-discrimination" evidence="1">
    <location>
        <position position="31"/>
    </location>
</feature>
<feature type="site" description="Important for tRNA non-discrimination" evidence="1">
    <location>
        <position position="80"/>
    </location>
</feature>
<keyword id="KW-0030">Aminoacyl-tRNA synthetase</keyword>
<keyword id="KW-0067">ATP-binding</keyword>
<keyword id="KW-0963">Cytoplasm</keyword>
<keyword id="KW-0436">Ligase</keyword>
<keyword id="KW-0547">Nucleotide-binding</keyword>
<keyword id="KW-0648">Protein biosynthesis</keyword>
<proteinExistence type="inferred from homology"/>
<comment type="function">
    <text evidence="1">Aspartyl-tRNA synthetase with relaxed tRNA specificity since it is able to aspartylate not only its cognate tRNA(Asp) but also tRNA(Asn). Reaction proceeds in two steps: L-aspartate is first activated by ATP to form Asp-AMP and then transferred to the acceptor end of tRNA(Asp/Asn).</text>
</comment>
<comment type="catalytic activity">
    <reaction evidence="1">
        <text>tRNA(Asx) + L-aspartate + ATP = L-aspartyl-tRNA(Asx) + AMP + diphosphate</text>
        <dbReference type="Rhea" id="RHEA:18349"/>
        <dbReference type="Rhea" id="RHEA-COMP:9710"/>
        <dbReference type="Rhea" id="RHEA-COMP:9711"/>
        <dbReference type="ChEBI" id="CHEBI:29991"/>
        <dbReference type="ChEBI" id="CHEBI:30616"/>
        <dbReference type="ChEBI" id="CHEBI:33019"/>
        <dbReference type="ChEBI" id="CHEBI:78442"/>
        <dbReference type="ChEBI" id="CHEBI:78516"/>
        <dbReference type="ChEBI" id="CHEBI:456215"/>
        <dbReference type="EC" id="6.1.1.23"/>
    </reaction>
</comment>
<comment type="subunit">
    <text evidence="1">Homodimer.</text>
</comment>
<comment type="subcellular location">
    <subcellularLocation>
        <location evidence="1">Cytoplasm</location>
    </subcellularLocation>
</comment>
<comment type="similarity">
    <text evidence="1">Belongs to the class-II aminoacyl-tRNA synthetase family. Type 1 subfamily.</text>
</comment>
<dbReference type="EC" id="6.1.1.23" evidence="1"/>
<dbReference type="EMBL" id="CP000479">
    <property type="protein sequence ID" value="ABK64519.1"/>
    <property type="molecule type" value="Genomic_DNA"/>
</dbReference>
<dbReference type="RefSeq" id="WP_011725475.1">
    <property type="nucleotide sequence ID" value="NC_008595.1"/>
</dbReference>
<dbReference type="SMR" id="A0QI91"/>
<dbReference type="KEGG" id="mav:MAV_3447"/>
<dbReference type="HOGENOM" id="CLU_014330_3_2_11"/>
<dbReference type="Proteomes" id="UP000001574">
    <property type="component" value="Chromosome"/>
</dbReference>
<dbReference type="GO" id="GO:0005737">
    <property type="term" value="C:cytoplasm"/>
    <property type="evidence" value="ECO:0007669"/>
    <property type="project" value="UniProtKB-SubCell"/>
</dbReference>
<dbReference type="GO" id="GO:0004815">
    <property type="term" value="F:aspartate-tRNA ligase activity"/>
    <property type="evidence" value="ECO:0007669"/>
    <property type="project" value="UniProtKB-UniRule"/>
</dbReference>
<dbReference type="GO" id="GO:0050560">
    <property type="term" value="F:aspartate-tRNA(Asn) ligase activity"/>
    <property type="evidence" value="ECO:0007669"/>
    <property type="project" value="UniProtKB-EC"/>
</dbReference>
<dbReference type="GO" id="GO:0005524">
    <property type="term" value="F:ATP binding"/>
    <property type="evidence" value="ECO:0007669"/>
    <property type="project" value="UniProtKB-UniRule"/>
</dbReference>
<dbReference type="GO" id="GO:0003676">
    <property type="term" value="F:nucleic acid binding"/>
    <property type="evidence" value="ECO:0007669"/>
    <property type="project" value="InterPro"/>
</dbReference>
<dbReference type="GO" id="GO:0006422">
    <property type="term" value="P:aspartyl-tRNA aminoacylation"/>
    <property type="evidence" value="ECO:0007669"/>
    <property type="project" value="UniProtKB-UniRule"/>
</dbReference>
<dbReference type="CDD" id="cd00777">
    <property type="entry name" value="AspRS_core"/>
    <property type="match status" value="1"/>
</dbReference>
<dbReference type="CDD" id="cd04317">
    <property type="entry name" value="EcAspRS_like_N"/>
    <property type="match status" value="1"/>
</dbReference>
<dbReference type="Gene3D" id="3.30.930.10">
    <property type="entry name" value="Bira Bifunctional Protein, Domain 2"/>
    <property type="match status" value="1"/>
</dbReference>
<dbReference type="Gene3D" id="3.30.1360.30">
    <property type="entry name" value="GAD-like domain"/>
    <property type="match status" value="1"/>
</dbReference>
<dbReference type="Gene3D" id="2.40.50.140">
    <property type="entry name" value="Nucleic acid-binding proteins"/>
    <property type="match status" value="1"/>
</dbReference>
<dbReference type="HAMAP" id="MF_00044">
    <property type="entry name" value="Asp_tRNA_synth_type1"/>
    <property type="match status" value="1"/>
</dbReference>
<dbReference type="InterPro" id="IPR004364">
    <property type="entry name" value="Aa-tRNA-synt_II"/>
</dbReference>
<dbReference type="InterPro" id="IPR006195">
    <property type="entry name" value="aa-tRNA-synth_II"/>
</dbReference>
<dbReference type="InterPro" id="IPR045864">
    <property type="entry name" value="aa-tRNA-synth_II/BPL/LPL"/>
</dbReference>
<dbReference type="InterPro" id="IPR004524">
    <property type="entry name" value="Asp-tRNA-ligase_1"/>
</dbReference>
<dbReference type="InterPro" id="IPR047089">
    <property type="entry name" value="Asp-tRNA-ligase_1_N"/>
</dbReference>
<dbReference type="InterPro" id="IPR002312">
    <property type="entry name" value="Asp/Asn-tRNA-synth_IIb"/>
</dbReference>
<dbReference type="InterPro" id="IPR047090">
    <property type="entry name" value="AspRS_core"/>
</dbReference>
<dbReference type="InterPro" id="IPR004115">
    <property type="entry name" value="GAD-like_sf"/>
</dbReference>
<dbReference type="InterPro" id="IPR029351">
    <property type="entry name" value="GAD_dom"/>
</dbReference>
<dbReference type="InterPro" id="IPR012340">
    <property type="entry name" value="NA-bd_OB-fold"/>
</dbReference>
<dbReference type="InterPro" id="IPR004365">
    <property type="entry name" value="NA-bd_OB_tRNA"/>
</dbReference>
<dbReference type="NCBIfam" id="TIGR00459">
    <property type="entry name" value="aspS_bact"/>
    <property type="match status" value="1"/>
</dbReference>
<dbReference type="NCBIfam" id="NF001750">
    <property type="entry name" value="PRK00476.1"/>
    <property type="match status" value="1"/>
</dbReference>
<dbReference type="PANTHER" id="PTHR22594:SF5">
    <property type="entry name" value="ASPARTATE--TRNA LIGASE, MITOCHONDRIAL"/>
    <property type="match status" value="1"/>
</dbReference>
<dbReference type="PANTHER" id="PTHR22594">
    <property type="entry name" value="ASPARTYL/LYSYL-TRNA SYNTHETASE"/>
    <property type="match status" value="1"/>
</dbReference>
<dbReference type="Pfam" id="PF02938">
    <property type="entry name" value="GAD"/>
    <property type="match status" value="1"/>
</dbReference>
<dbReference type="Pfam" id="PF00152">
    <property type="entry name" value="tRNA-synt_2"/>
    <property type="match status" value="1"/>
</dbReference>
<dbReference type="Pfam" id="PF01336">
    <property type="entry name" value="tRNA_anti-codon"/>
    <property type="match status" value="1"/>
</dbReference>
<dbReference type="PRINTS" id="PR01042">
    <property type="entry name" value="TRNASYNTHASP"/>
</dbReference>
<dbReference type="SUPFAM" id="SSF55681">
    <property type="entry name" value="Class II aaRS and biotin synthetases"/>
    <property type="match status" value="1"/>
</dbReference>
<dbReference type="SUPFAM" id="SSF55261">
    <property type="entry name" value="GAD domain-like"/>
    <property type="match status" value="1"/>
</dbReference>
<dbReference type="SUPFAM" id="SSF50249">
    <property type="entry name" value="Nucleic acid-binding proteins"/>
    <property type="match status" value="1"/>
</dbReference>
<dbReference type="PROSITE" id="PS50862">
    <property type="entry name" value="AA_TRNA_LIGASE_II"/>
    <property type="match status" value="1"/>
</dbReference>
<gene>
    <name evidence="1" type="primary">aspS</name>
    <name type="ordered locus">MAV_3447</name>
</gene>